<dbReference type="EC" id="3.6.4.10" evidence="4"/>
<dbReference type="EMBL" id="JH373186">
    <property type="status" value="NOT_ANNOTATED_CDS"/>
    <property type="molecule type" value="Genomic_DNA"/>
</dbReference>
<dbReference type="SMR" id="P99502"/>
<dbReference type="FunCoup" id="P99502">
    <property type="interactions" value="1717"/>
</dbReference>
<dbReference type="InParanoid" id="P99502"/>
<dbReference type="OrthoDB" id="2401965at2759"/>
<dbReference type="Proteomes" id="UP000002254">
    <property type="component" value="Unplaced"/>
</dbReference>
<dbReference type="Proteomes" id="UP000694429">
    <property type="component" value="Unplaced"/>
</dbReference>
<dbReference type="Proteomes" id="UP000694542">
    <property type="component" value="Unplaced"/>
</dbReference>
<dbReference type="Proteomes" id="UP000805418">
    <property type="component" value="Unplaced"/>
</dbReference>
<dbReference type="GO" id="GO:0005737">
    <property type="term" value="C:cytoplasm"/>
    <property type="evidence" value="ECO:0000250"/>
    <property type="project" value="UniProtKB"/>
</dbReference>
<dbReference type="GO" id="GO:0005759">
    <property type="term" value="C:mitochondrial matrix"/>
    <property type="evidence" value="ECO:0000250"/>
    <property type="project" value="UniProtKB"/>
</dbReference>
<dbReference type="GO" id="GO:0005739">
    <property type="term" value="C:mitochondrion"/>
    <property type="evidence" value="ECO:0000250"/>
    <property type="project" value="UniProtKB"/>
</dbReference>
<dbReference type="GO" id="GO:0005730">
    <property type="term" value="C:nucleolus"/>
    <property type="evidence" value="ECO:0007669"/>
    <property type="project" value="UniProtKB-SubCell"/>
</dbReference>
<dbReference type="GO" id="GO:0005524">
    <property type="term" value="F:ATP binding"/>
    <property type="evidence" value="ECO:0007669"/>
    <property type="project" value="UniProtKB-KW"/>
</dbReference>
<dbReference type="GO" id="GO:0016887">
    <property type="term" value="F:ATP hydrolysis activity"/>
    <property type="evidence" value="ECO:0000250"/>
    <property type="project" value="UniProtKB"/>
</dbReference>
<dbReference type="GO" id="GO:0140662">
    <property type="term" value="F:ATP-dependent protein folding chaperone"/>
    <property type="evidence" value="ECO:0007669"/>
    <property type="project" value="InterPro"/>
</dbReference>
<dbReference type="GO" id="GO:0051082">
    <property type="term" value="F:unfolded protein binding"/>
    <property type="evidence" value="ECO:0007669"/>
    <property type="project" value="InterPro"/>
</dbReference>
<dbReference type="GO" id="GO:0036444">
    <property type="term" value="P:calcium import into the mitochondrion"/>
    <property type="evidence" value="ECO:0000250"/>
    <property type="project" value="UniProtKB"/>
</dbReference>
<dbReference type="GO" id="GO:0030218">
    <property type="term" value="P:erythrocyte differentiation"/>
    <property type="evidence" value="ECO:0000250"/>
    <property type="project" value="UniProtKB"/>
</dbReference>
<dbReference type="GO" id="GO:0016226">
    <property type="term" value="P:iron-sulfur cluster assembly"/>
    <property type="evidence" value="ECO:0000250"/>
    <property type="project" value="UniProtKB"/>
</dbReference>
<dbReference type="GO" id="GO:0045647">
    <property type="term" value="P:negative regulation of erythrocyte differentiation"/>
    <property type="evidence" value="ECO:0000250"/>
    <property type="project" value="UniProtKB"/>
</dbReference>
<dbReference type="GO" id="GO:1902037">
    <property type="term" value="P:negative regulation of hematopoietic stem cell differentiation"/>
    <property type="evidence" value="ECO:0000250"/>
    <property type="project" value="UniProtKB"/>
</dbReference>
<dbReference type="GO" id="GO:1903707">
    <property type="term" value="P:negative regulation of hemopoiesis"/>
    <property type="evidence" value="ECO:0000250"/>
    <property type="project" value="UniProtKB"/>
</dbReference>
<dbReference type="GO" id="GO:0045646">
    <property type="term" value="P:regulation of erythrocyte differentiation"/>
    <property type="evidence" value="ECO:0000250"/>
    <property type="project" value="UniProtKB"/>
</dbReference>
<dbReference type="CDD" id="cd11733">
    <property type="entry name" value="ASKHA_NBD_HSP70_HSPA9"/>
    <property type="match status" value="1"/>
</dbReference>
<dbReference type="FunFam" id="3.30.420.40:FF:000020">
    <property type="entry name" value="Chaperone protein HscA homolog"/>
    <property type="match status" value="1"/>
</dbReference>
<dbReference type="FunFam" id="3.30.30.30:FF:000003">
    <property type="entry name" value="Heat shock protein 9"/>
    <property type="match status" value="1"/>
</dbReference>
<dbReference type="FunFam" id="3.30.420.40:FF:000004">
    <property type="entry name" value="Molecular chaperone DnaK"/>
    <property type="match status" value="1"/>
</dbReference>
<dbReference type="FunFam" id="3.90.640.10:FF:000003">
    <property type="entry name" value="Molecular chaperone DnaK"/>
    <property type="match status" value="1"/>
</dbReference>
<dbReference type="Gene3D" id="3.30.30.30">
    <property type="match status" value="1"/>
</dbReference>
<dbReference type="Gene3D" id="3.30.420.40">
    <property type="match status" value="2"/>
</dbReference>
<dbReference type="Gene3D" id="3.90.640.10">
    <property type="entry name" value="Actin, Chain A, domain 4"/>
    <property type="match status" value="1"/>
</dbReference>
<dbReference type="Gene3D" id="2.60.34.10">
    <property type="entry name" value="Substrate Binding Domain Of DNAk, Chain A, domain 1"/>
    <property type="match status" value="1"/>
</dbReference>
<dbReference type="InterPro" id="IPR043129">
    <property type="entry name" value="ATPase_NBD"/>
</dbReference>
<dbReference type="InterPro" id="IPR012725">
    <property type="entry name" value="Chaperone_DnaK"/>
</dbReference>
<dbReference type="InterPro" id="IPR018181">
    <property type="entry name" value="Heat_shock_70_CS"/>
</dbReference>
<dbReference type="InterPro" id="IPR029047">
    <property type="entry name" value="HSP70_peptide-bd_sf"/>
</dbReference>
<dbReference type="InterPro" id="IPR013126">
    <property type="entry name" value="Hsp_70_fam"/>
</dbReference>
<dbReference type="NCBIfam" id="NF001413">
    <property type="entry name" value="PRK00290.1"/>
    <property type="match status" value="1"/>
</dbReference>
<dbReference type="NCBIfam" id="TIGR02350">
    <property type="entry name" value="prok_dnaK"/>
    <property type="match status" value="1"/>
</dbReference>
<dbReference type="PANTHER" id="PTHR19375">
    <property type="entry name" value="HEAT SHOCK PROTEIN 70KDA"/>
    <property type="match status" value="1"/>
</dbReference>
<dbReference type="Pfam" id="PF00012">
    <property type="entry name" value="HSP70"/>
    <property type="match status" value="1"/>
</dbReference>
<dbReference type="PRINTS" id="PR00301">
    <property type="entry name" value="HEATSHOCK70"/>
</dbReference>
<dbReference type="SUPFAM" id="SSF53067">
    <property type="entry name" value="Actin-like ATPase domain"/>
    <property type="match status" value="2"/>
</dbReference>
<dbReference type="SUPFAM" id="SSF100920">
    <property type="entry name" value="Heat shock protein 70kD (HSP70), peptide-binding domain"/>
    <property type="match status" value="1"/>
</dbReference>
<dbReference type="PROSITE" id="PS00297">
    <property type="entry name" value="HSP70_1"/>
    <property type="match status" value="1"/>
</dbReference>
<dbReference type="PROSITE" id="PS00329">
    <property type="entry name" value="HSP70_2"/>
    <property type="match status" value="1"/>
</dbReference>
<dbReference type="PROSITE" id="PS01036">
    <property type="entry name" value="HSP70_3"/>
    <property type="match status" value="1"/>
</dbReference>
<organism>
    <name type="scientific">Canis lupus familiaris</name>
    <name type="common">Dog</name>
    <name type="synonym">Canis familiaris</name>
    <dbReference type="NCBI Taxonomy" id="9615"/>
    <lineage>
        <taxon>Eukaryota</taxon>
        <taxon>Metazoa</taxon>
        <taxon>Chordata</taxon>
        <taxon>Craniata</taxon>
        <taxon>Vertebrata</taxon>
        <taxon>Euteleostomi</taxon>
        <taxon>Mammalia</taxon>
        <taxon>Eutheria</taxon>
        <taxon>Laurasiatheria</taxon>
        <taxon>Carnivora</taxon>
        <taxon>Caniformia</taxon>
        <taxon>Canidae</taxon>
        <taxon>Canis</taxon>
    </lineage>
</organism>
<keyword id="KW-0007">Acetylation</keyword>
<keyword id="KW-0067">ATP-binding</keyword>
<keyword id="KW-0143">Chaperone</keyword>
<keyword id="KW-0963">Cytoplasm</keyword>
<keyword id="KW-0903">Direct protein sequencing</keyword>
<keyword id="KW-0378">Hydrolase</keyword>
<keyword id="KW-0496">Mitochondrion</keyword>
<keyword id="KW-0547">Nucleotide-binding</keyword>
<keyword id="KW-0539">Nucleus</keyword>
<keyword id="KW-0597">Phosphoprotein</keyword>
<keyword id="KW-1185">Reference proteome</keyword>
<keyword id="KW-0809">Transit peptide</keyword>
<gene>
    <name evidence="4" type="primary">HSPA9</name>
</gene>
<name>HSPA9_CANLF</name>
<protein>
    <recommendedName>
        <fullName evidence="4">Stress-70 protein, mitochondrial</fullName>
        <ecNumber evidence="4">3.6.4.10</ecNumber>
    </recommendedName>
    <alternativeName>
        <fullName>75 kDa glucose-regulated protein</fullName>
        <shortName>GRP-75</shortName>
    </alternativeName>
    <alternativeName>
        <fullName>Heat shock 70 kDa protein 9</fullName>
    </alternativeName>
</protein>
<accession>P99502</accession>
<comment type="function">
    <text evidence="1 4 5">Mitochondrial chaperone that plays a key role in mitochondrial protein import, folding, and assembly. Plays an essential role in the protein quality control system, the correct folding of proteins, the re-folding of misfolded proteins, and the targeting of proteins for subsequent degradation. These processes are achieved through cycles of ATP binding, ATP hydrolysis, and ADP release, mediated by co-chaperones. In mitochondria, it associates with the TIM (translocase of the inner membrane) protein complex to assist in the import and folding of mitochondrial proteins (By similarity). Plays an important role in mitochondrial iron-sulfur cluster (ISC) biogenesis, interacts with and stabilizes ISC cluster assembly proteins FXN, NFU1, NFS1 and ISCU. Regulates erythropoiesis via stabilization of ISC assembly. Regulates mitochondrial calcium-dependent apoptosis by coupling two calcium channels, ITPR1 and VDAC1, at the mitochondria-associated endoplasmic reticulum (ER) membrane to facilitate calcium transport from the ER lumen to the mitochondria intermembrane space, providing calcium for the downstream calcium channel MCU, which releases it into the mitochondrial matrix (By similarity). Although primarily located in the mitochondria, it is also found in other cellular compartments. In the cytosol, it associates with proteins involved in signaling, apoptosis, or senescence. It may play a role in cell cycle regulation via its interaction with and promotion of degradation of TP53 (By similarity). May play a role in the control of cell proliferation and cellular aging (By similarity). Protects against reactive oxygen species (ROS) (By similarity). Extracellular HSPA9 plays a cytoprotective role by preventing cell lysis following immune attack by the membrane attack complex by disrupting formation of the complex (By similarity).</text>
</comment>
<comment type="catalytic activity">
    <reaction evidence="4">
        <text>ATP + H2O = ADP + phosphate + H(+)</text>
        <dbReference type="Rhea" id="RHEA:13065"/>
        <dbReference type="ChEBI" id="CHEBI:15377"/>
        <dbReference type="ChEBI" id="CHEBI:15378"/>
        <dbReference type="ChEBI" id="CHEBI:30616"/>
        <dbReference type="ChEBI" id="CHEBI:43474"/>
        <dbReference type="ChEBI" id="CHEBI:456216"/>
        <dbReference type="EC" id="3.6.4.10"/>
    </reaction>
    <physiologicalReaction direction="left-to-right" evidence="4">
        <dbReference type="Rhea" id="RHEA:13066"/>
    </physiologicalReaction>
</comment>
<comment type="activity regulation">
    <text evidence="3 4">The chaperone activity is regulated by ATP-induced allosteric coupling of the nucleotide-binding (NBD) and substrate-binding (SBD) domains. ATP binding in the NBD leads to a conformational change in the NBD, which is transferred through the interdomain linker (IDL) to the substrate-binding domain (SBD). This elicits a reduced substrate affinity and a faster substrate exchange rate. Upon hydrolysis of ATP to ADP, the protein undergoes a conformational change that increases its affinity for substrate proteins. It cycles through repeated phases of ATP hydrolysis and nucleotide exchange, facilitating repeated cycles of substrate binding and release (By similarity). Functions in collaboration with co-chaperones. Functions with the co-chaperone, DNLZ, to maintain solubility and regulate ATP hydrolysis. Nucleotide exchange factors, GRPEL1 and GRPEL2, accelerate nucleotide exchange (By similarity).</text>
</comment>
<comment type="subunit">
    <text evidence="4 6">Interacts strongly with the intermediate form of FXN and weakly with its mature form. Interacts with HSCB. Associates with the mitochondrial contact site and cristae organizing system (MICOS) complex, composed of at least MICOS10/MIC10, CHCHD3/MIC19, CHCHD6/MIC25, APOOL/MIC27, IMMT/MIC60, APOO/MIC23/MIC26 and QIL1/MIC13. This complex was also known under the names MINOS or MitOS complex. The MICOS complex associates with mitochondrial outer membrane proteins SAMM50, MTX1, MTX2 and DNAJC11, mitochondrial inner membrane protein TMEM11 and with HSPA9. Interacts with DNLZ, the interaction is required to prevent self-aggregation. Interacts with TESPA1. Interacts with PDPN. Interacts with NFU1, NFS1 and ISCU. Interacts with TP53; the interaction promotes TP53 degradation (By similarity). Interacts (via SBD domain) with UBXN2A; the interaction with UBXN2A inhibits HSPA9/MOT-2 interaction with and degradation of TP53, thereby promotes TP53 translocation to the nucleus (By similarity). Interacts with ITPR1 AND VDAC1; this interaction couples ITPR1 to VDAC1 (By similarity). Component of the TIM23 mitochondrial inner membrane pre-sequence translocase complex (By similarity).</text>
</comment>
<comment type="subcellular location">
    <subcellularLocation>
        <location evidence="4">Mitochondrion</location>
    </subcellularLocation>
    <subcellularLocation>
        <location evidence="4">Nucleus</location>
        <location evidence="4">Nucleolus</location>
    </subcellularLocation>
    <subcellularLocation>
        <location evidence="4">Cytoplasm</location>
    </subcellularLocation>
    <subcellularLocation>
        <location evidence="6">Mitochondrion matrix</location>
    </subcellularLocation>
    <text evidence="6">Found in a complex with HSPA9 and VDAC1 at the endoplasmic reticulum-mitochondria contact sites.</text>
</comment>
<comment type="domain">
    <text evidence="2">The N-terminal nucleotide binding domain (NBD) is responsible for binding and hydrolyzing ATP. The C-terminal substrate-binding domain (SBD) binds to the client/substrate proteins. The two domains are allosterically coupled so that, when ATP is bound to the NBD, the SBD binds relatively weakly to clients. When ADP is bound in the NBD, a conformational change enhances the affinity of the SBD for client proteins.</text>
</comment>
<comment type="similarity">
    <text evidence="7">Belongs to the heat shock protein 70 family.</text>
</comment>
<reference key="1">
    <citation type="journal article" date="2005" name="Nature">
        <title>Genome sequence, comparative analysis and haplotype structure of the domestic dog.</title>
        <authorList>
            <person name="Lindblad-Toh K."/>
            <person name="Wade C.M."/>
            <person name="Mikkelsen T.S."/>
            <person name="Karlsson E.K."/>
            <person name="Jaffe D.B."/>
            <person name="Kamal M."/>
            <person name="Clamp M."/>
            <person name="Chang J.L."/>
            <person name="Kulbokas E.J. III"/>
            <person name="Zody M.C."/>
            <person name="Mauceli E."/>
            <person name="Xie X."/>
            <person name="Breen M."/>
            <person name="Wayne R.K."/>
            <person name="Ostrander E.A."/>
            <person name="Ponting C.P."/>
            <person name="Galibert F."/>
            <person name="Smith D.R."/>
            <person name="deJong P.J."/>
            <person name="Kirkness E.F."/>
            <person name="Alvarez P."/>
            <person name="Biagi T."/>
            <person name="Brockman W."/>
            <person name="Butler J."/>
            <person name="Chin C.-W."/>
            <person name="Cook A."/>
            <person name="Cuff J."/>
            <person name="Daly M.J."/>
            <person name="DeCaprio D."/>
            <person name="Gnerre S."/>
            <person name="Grabherr M."/>
            <person name="Kellis M."/>
            <person name="Kleber M."/>
            <person name="Bardeleben C."/>
            <person name="Goodstadt L."/>
            <person name="Heger A."/>
            <person name="Hitte C."/>
            <person name="Kim L."/>
            <person name="Koepfli K.-P."/>
            <person name="Parker H.G."/>
            <person name="Pollinger J.P."/>
            <person name="Searle S.M.J."/>
            <person name="Sutter N.B."/>
            <person name="Thomas R."/>
            <person name="Webber C."/>
            <person name="Baldwin J."/>
            <person name="Abebe A."/>
            <person name="Abouelleil A."/>
            <person name="Aftuck L."/>
            <person name="Ait-Zahra M."/>
            <person name="Aldredge T."/>
            <person name="Allen N."/>
            <person name="An P."/>
            <person name="Anderson S."/>
            <person name="Antoine C."/>
            <person name="Arachchi H."/>
            <person name="Aslam A."/>
            <person name="Ayotte L."/>
            <person name="Bachantsang P."/>
            <person name="Barry A."/>
            <person name="Bayul T."/>
            <person name="Benamara M."/>
            <person name="Berlin A."/>
            <person name="Bessette D."/>
            <person name="Blitshteyn B."/>
            <person name="Bloom T."/>
            <person name="Blye J."/>
            <person name="Boguslavskiy L."/>
            <person name="Bonnet C."/>
            <person name="Boukhgalter B."/>
            <person name="Brown A."/>
            <person name="Cahill P."/>
            <person name="Calixte N."/>
            <person name="Camarata J."/>
            <person name="Cheshatsang Y."/>
            <person name="Chu J."/>
            <person name="Citroen M."/>
            <person name="Collymore A."/>
            <person name="Cooke P."/>
            <person name="Dawoe T."/>
            <person name="Daza R."/>
            <person name="Decktor K."/>
            <person name="DeGray S."/>
            <person name="Dhargay N."/>
            <person name="Dooley K."/>
            <person name="Dooley K."/>
            <person name="Dorje P."/>
            <person name="Dorjee K."/>
            <person name="Dorris L."/>
            <person name="Duffey N."/>
            <person name="Dupes A."/>
            <person name="Egbiremolen O."/>
            <person name="Elong R."/>
            <person name="Falk J."/>
            <person name="Farina A."/>
            <person name="Faro S."/>
            <person name="Ferguson D."/>
            <person name="Ferreira P."/>
            <person name="Fisher S."/>
            <person name="FitzGerald M."/>
            <person name="Foley K."/>
            <person name="Foley C."/>
            <person name="Franke A."/>
            <person name="Friedrich D."/>
            <person name="Gage D."/>
            <person name="Garber M."/>
            <person name="Gearin G."/>
            <person name="Giannoukos G."/>
            <person name="Goode T."/>
            <person name="Goyette A."/>
            <person name="Graham J."/>
            <person name="Grandbois E."/>
            <person name="Gyaltsen K."/>
            <person name="Hafez N."/>
            <person name="Hagopian D."/>
            <person name="Hagos B."/>
            <person name="Hall J."/>
            <person name="Healy C."/>
            <person name="Hegarty R."/>
            <person name="Honan T."/>
            <person name="Horn A."/>
            <person name="Houde N."/>
            <person name="Hughes L."/>
            <person name="Hunnicutt L."/>
            <person name="Husby M."/>
            <person name="Jester B."/>
            <person name="Jones C."/>
            <person name="Kamat A."/>
            <person name="Kanga B."/>
            <person name="Kells C."/>
            <person name="Khazanovich D."/>
            <person name="Kieu A.C."/>
            <person name="Kisner P."/>
            <person name="Kumar M."/>
            <person name="Lance K."/>
            <person name="Landers T."/>
            <person name="Lara M."/>
            <person name="Lee W."/>
            <person name="Leger J.-P."/>
            <person name="Lennon N."/>
            <person name="Leuper L."/>
            <person name="LeVine S."/>
            <person name="Liu J."/>
            <person name="Liu X."/>
            <person name="Lokyitsang Y."/>
            <person name="Lokyitsang T."/>
            <person name="Lui A."/>
            <person name="Macdonald J."/>
            <person name="Major J."/>
            <person name="Marabella R."/>
            <person name="Maru K."/>
            <person name="Matthews C."/>
            <person name="McDonough S."/>
            <person name="Mehta T."/>
            <person name="Meldrim J."/>
            <person name="Melnikov A."/>
            <person name="Meneus L."/>
            <person name="Mihalev A."/>
            <person name="Mihova T."/>
            <person name="Miller K."/>
            <person name="Mittelman R."/>
            <person name="Mlenga V."/>
            <person name="Mulrain L."/>
            <person name="Munson G."/>
            <person name="Navidi A."/>
            <person name="Naylor J."/>
            <person name="Nguyen T."/>
            <person name="Nguyen N."/>
            <person name="Nguyen C."/>
            <person name="Nguyen T."/>
            <person name="Nicol R."/>
            <person name="Norbu N."/>
            <person name="Norbu C."/>
            <person name="Novod N."/>
            <person name="Nyima T."/>
            <person name="Olandt P."/>
            <person name="O'Neill B."/>
            <person name="O'Neill K."/>
            <person name="Osman S."/>
            <person name="Oyono L."/>
            <person name="Patti C."/>
            <person name="Perrin D."/>
            <person name="Phunkhang P."/>
            <person name="Pierre F."/>
            <person name="Priest M."/>
            <person name="Rachupka A."/>
            <person name="Raghuraman S."/>
            <person name="Rameau R."/>
            <person name="Ray V."/>
            <person name="Raymond C."/>
            <person name="Rege F."/>
            <person name="Rise C."/>
            <person name="Rogers J."/>
            <person name="Rogov P."/>
            <person name="Sahalie J."/>
            <person name="Settipalli S."/>
            <person name="Sharpe T."/>
            <person name="Shea T."/>
            <person name="Sheehan M."/>
            <person name="Sherpa N."/>
            <person name="Shi J."/>
            <person name="Shih D."/>
            <person name="Sloan J."/>
            <person name="Smith C."/>
            <person name="Sparrow T."/>
            <person name="Stalker J."/>
            <person name="Stange-Thomann N."/>
            <person name="Stavropoulos S."/>
            <person name="Stone C."/>
            <person name="Stone S."/>
            <person name="Sykes S."/>
            <person name="Tchuinga P."/>
            <person name="Tenzing P."/>
            <person name="Tesfaye S."/>
            <person name="Thoulutsang D."/>
            <person name="Thoulutsang Y."/>
            <person name="Topham K."/>
            <person name="Topping I."/>
            <person name="Tsamla T."/>
            <person name="Vassiliev H."/>
            <person name="Venkataraman V."/>
            <person name="Vo A."/>
            <person name="Wangchuk T."/>
            <person name="Wangdi T."/>
            <person name="Weiand M."/>
            <person name="Wilkinson J."/>
            <person name="Wilson A."/>
            <person name="Yadav S."/>
            <person name="Yang S."/>
            <person name="Yang X."/>
            <person name="Young G."/>
            <person name="Yu Q."/>
            <person name="Zainoun J."/>
            <person name="Zembek L."/>
            <person name="Zimmer A."/>
            <person name="Lander E.S."/>
        </authorList>
    </citation>
    <scope>NUCLEOTIDE SEQUENCE [LARGE SCALE GENOMIC DNA]</scope>
    <source>
        <strain>Boxer</strain>
    </source>
</reference>
<reference key="2">
    <citation type="journal article" date="1997" name="Electrophoresis">
        <title>HSC-2DPAGE and the two-dimensional gel electrophoresis database of dog heart proteins.</title>
        <authorList>
            <person name="Dunn M.J."/>
            <person name="Corbett J.M."/>
            <person name="Wheeler C.H."/>
        </authorList>
    </citation>
    <scope>PROTEIN SEQUENCE OF 47-60</scope>
    <source>
        <tissue>Heart</tissue>
    </source>
</reference>
<feature type="transit peptide" description="Mitochondrion" evidence="5">
    <location>
        <begin position="1"/>
        <end position="46"/>
    </location>
</feature>
<feature type="chain" id="PRO_0000078661" description="Stress-70 protein, mitochondrial">
    <location>
        <begin position="47"/>
        <end position="649"/>
    </location>
</feature>
<feature type="region of interest" description="Interaction with NFS1" evidence="4">
    <location>
        <begin position="1"/>
        <end position="432"/>
    </location>
</feature>
<feature type="region of interest" description="Nucleotide-binding domain (NBD)" evidence="4">
    <location>
        <begin position="63"/>
        <end position="431"/>
    </location>
</feature>
<feature type="region of interest" description="Interdomain linker" evidence="4">
    <location>
        <begin position="432"/>
        <end position="441"/>
    </location>
</feature>
<feature type="binding site" evidence="4">
    <location>
        <position position="63"/>
    </location>
    <ligand>
        <name>ADP</name>
        <dbReference type="ChEBI" id="CHEBI:456216"/>
    </ligand>
</feature>
<feature type="binding site" evidence="4">
    <location>
        <position position="64"/>
    </location>
    <ligand>
        <name>ADP</name>
        <dbReference type="ChEBI" id="CHEBI:456216"/>
    </ligand>
</feature>
<feature type="binding site" evidence="4">
    <location>
        <position position="313"/>
    </location>
    <ligand>
        <name>ADP</name>
        <dbReference type="ChEBI" id="CHEBI:456216"/>
    </ligand>
</feature>
<feature type="binding site" evidence="4">
    <location>
        <position position="316"/>
    </location>
    <ligand>
        <name>ADP</name>
        <dbReference type="ChEBI" id="CHEBI:456216"/>
    </ligand>
</feature>
<feature type="binding site" evidence="4">
    <location>
        <position position="320"/>
    </location>
    <ligand>
        <name>ADP</name>
        <dbReference type="ChEBI" id="CHEBI:456216"/>
    </ligand>
</feature>
<feature type="binding site" evidence="4">
    <location>
        <position position="388"/>
    </location>
    <ligand>
        <name>ADP</name>
        <dbReference type="ChEBI" id="CHEBI:456216"/>
    </ligand>
</feature>
<feature type="binding site" evidence="4">
    <location>
        <position position="391"/>
    </location>
    <ligand>
        <name>ADP</name>
        <dbReference type="ChEBI" id="CHEBI:456216"/>
    </ligand>
</feature>
<feature type="modified residue" description="N6-acetyllysine" evidence="5">
    <location>
        <position position="76"/>
    </location>
</feature>
<feature type="modified residue" description="Phosphothreonine" evidence="4">
    <location>
        <position position="87"/>
    </location>
</feature>
<feature type="modified residue" description="N6-acetyllysine; alternate" evidence="5">
    <location>
        <position position="135"/>
    </location>
</feature>
<feature type="modified residue" description="N6-succinyllysine; alternate" evidence="5">
    <location>
        <position position="135"/>
    </location>
</feature>
<feature type="modified residue" description="N6-acetyllysine; alternate" evidence="5">
    <location>
        <position position="138"/>
    </location>
</feature>
<feature type="modified residue" description="N6-succinyllysine; alternate" evidence="5">
    <location>
        <position position="138"/>
    </location>
</feature>
<feature type="modified residue" description="N6-acetyllysine" evidence="4">
    <location>
        <position position="143"/>
    </location>
</feature>
<feature type="modified residue" description="N6-acetyllysine; alternate" evidence="5">
    <location>
        <position position="206"/>
    </location>
</feature>
<feature type="modified residue" description="N6-malonyllysine; alternate" evidence="5">
    <location>
        <position position="206"/>
    </location>
</feature>
<feature type="modified residue" description="N6-succinyllysine; alternate" evidence="5">
    <location>
        <position position="206"/>
    </location>
</feature>
<feature type="modified residue" description="N6-acetyllysine" evidence="5">
    <location>
        <position position="234"/>
    </location>
</feature>
<feature type="modified residue" description="N6-acetyllysine" evidence="5">
    <location>
        <position position="288"/>
    </location>
</feature>
<feature type="modified residue" description="N6-acetyllysine; alternate" evidence="5">
    <location>
        <position position="300"/>
    </location>
</feature>
<feature type="modified residue" description="N6-succinyllysine; alternate" evidence="5">
    <location>
        <position position="300"/>
    </location>
</feature>
<feature type="modified residue" description="N6-succinyllysine" evidence="5">
    <location>
        <position position="368"/>
    </location>
</feature>
<feature type="modified residue" description="N6-succinyllysine" evidence="5">
    <location>
        <position position="394"/>
    </location>
</feature>
<feature type="modified residue" description="Phosphoserine" evidence="4">
    <location>
        <position position="408"/>
    </location>
</feature>
<feature type="modified residue" description="N6-acetyllysine; alternate" evidence="5">
    <location>
        <position position="565"/>
    </location>
</feature>
<feature type="modified residue" description="N6-succinyllysine; alternate" evidence="5">
    <location>
        <position position="565"/>
    </location>
</feature>
<feature type="modified residue" description="N6-acetyllysine; alternate" evidence="5">
    <location>
        <position position="598"/>
    </location>
</feature>
<feature type="modified residue" description="N6-succinyllysine; alternate" evidence="5">
    <location>
        <position position="598"/>
    </location>
</feature>
<feature type="modified residue" description="N6-acetyllysine; alternate" evidence="5">
    <location>
        <position position="638"/>
    </location>
</feature>
<feature type="modified residue" description="N6-succinyllysine; alternate" evidence="5">
    <location>
        <position position="638"/>
    </location>
</feature>
<sequence length="649" mass="70446">MISASRAAAARLVGAAASRGPTAARHKDGWNGLSHEAFRIVSRRDYASEAIKGAVVGIDLGTTNSCVAVMEGKQAKVLENAEGARTTPSVVAFTSDGERLVGMPAKRQAVTNPNNTFYATKRLIGRRYDDPEVQKDIKNVPFKIVRASNGDAWVEAHGKLYSPSQIGAFVLMKMKETAENYLGHTAKNAVITVPAYFNDSQRQATKDAGQISGLNVLRVINEPTAAALAYGLDKSEDKIIAVYDLGGGTFDISILEIQKGVFEVKSTNGDTFLGGEDFDQALLRHIVKEFKRETGVDLTKDNMALQRVREAAEKAKCELSSSVQTDINLPYLTMDASGPKHLNMKLTRAQFEGIVTDLIRRTIAPCQKAMQDAEVSKSDIGEVILVGGMTRMPKVQQTVQDLFGRAPSKAVNPDEAVAIGAAIQGGVLAGDVTDVLLLDVTPLSLGIETLGGVFTNLSTETPLFQPRKVFSTAADGQTQVEIKVCQGEREMAGDNKLLGQFTLIGIPQPLVESLRLKLPFDIDANGIVHVSAKDKGTGREQQIVIQSSGGLSKDDIENMVKNAEKYAEEDRRKKVTTFSVNMAEGIIHDTETKMEEFKDQLPAEEVNFQNEGTLARKDSETGENIRQAASSLQQASLKLFEWHTKRYVG</sequence>
<evidence type="ECO:0000250" key="1">
    <source>
        <dbReference type="UniProtKB" id="P0CS90"/>
    </source>
</evidence>
<evidence type="ECO:0000250" key="2">
    <source>
        <dbReference type="UniProtKB" id="P0DMV8"/>
    </source>
</evidence>
<evidence type="ECO:0000250" key="3">
    <source>
        <dbReference type="UniProtKB" id="P11021"/>
    </source>
</evidence>
<evidence type="ECO:0000250" key="4">
    <source>
        <dbReference type="UniProtKB" id="P38646"/>
    </source>
</evidence>
<evidence type="ECO:0000250" key="5">
    <source>
        <dbReference type="UniProtKB" id="P38647"/>
    </source>
</evidence>
<evidence type="ECO:0000250" key="6">
    <source>
        <dbReference type="UniProtKB" id="P48721"/>
    </source>
</evidence>
<evidence type="ECO:0000305" key="7"/>
<proteinExistence type="evidence at protein level"/>